<keyword id="KW-0007">Acetylation</keyword>
<keyword id="KW-0025">Alternative splicing</keyword>
<keyword id="KW-0966">Cell projection</keyword>
<keyword id="KW-0968">Cytoplasmic vesicle</keyword>
<keyword id="KW-0903">Direct protein sequencing</keyword>
<keyword id="KW-0342">GTP-binding</keyword>
<keyword id="KW-0378">Hydrolase</keyword>
<keyword id="KW-0449">Lipoprotein</keyword>
<keyword id="KW-0460">Magnesium</keyword>
<keyword id="KW-0479">Metal-binding</keyword>
<keyword id="KW-0488">Methylation</keyword>
<keyword id="KW-0547">Nucleotide-binding</keyword>
<keyword id="KW-0636">Prenylation</keyword>
<keyword id="KW-0653">Protein transport</keyword>
<keyword id="KW-1267">Proteomics identification</keyword>
<keyword id="KW-1185">Reference proteome</keyword>
<keyword id="KW-0813">Transport</keyword>
<evidence type="ECO:0000250" key="1"/>
<evidence type="ECO:0000250" key="2">
    <source>
        <dbReference type="UniProtKB" id="P61026"/>
    </source>
</evidence>
<evidence type="ECO:0000250" key="3">
    <source>
        <dbReference type="UniProtKB" id="P62820"/>
    </source>
</evidence>
<evidence type="ECO:0000250" key="4">
    <source>
        <dbReference type="UniProtKB" id="Q9JKM7"/>
    </source>
</evidence>
<evidence type="ECO:0000255" key="5"/>
<evidence type="ECO:0000256" key="6">
    <source>
        <dbReference type="SAM" id="MobiDB-lite"/>
    </source>
</evidence>
<evidence type="ECO:0000269" key="7">
    <source>
    </source>
</evidence>
<evidence type="ECO:0000269" key="8">
    <source>
    </source>
</evidence>
<evidence type="ECO:0000303" key="9">
    <source>
    </source>
</evidence>
<evidence type="ECO:0000303" key="10">
    <source>
    </source>
</evidence>
<evidence type="ECO:0000305" key="11"/>
<evidence type="ECO:0000305" key="12">
    <source>
    </source>
</evidence>
<evidence type="ECO:0000312" key="13">
    <source>
        <dbReference type="HGNC" id="HGNC:30268"/>
    </source>
</evidence>
<organism>
    <name type="scientific">Homo sapiens</name>
    <name type="common">Human</name>
    <dbReference type="NCBI Taxonomy" id="9606"/>
    <lineage>
        <taxon>Eukaryota</taxon>
        <taxon>Metazoa</taxon>
        <taxon>Chordata</taxon>
        <taxon>Craniata</taxon>
        <taxon>Vertebrata</taxon>
        <taxon>Euteleostomi</taxon>
        <taxon>Mammalia</taxon>
        <taxon>Eutheria</taxon>
        <taxon>Euarchontoglires</taxon>
        <taxon>Primates</taxon>
        <taxon>Haplorrhini</taxon>
        <taxon>Catarrhini</taxon>
        <taxon>Hominidae</taxon>
        <taxon>Homo</taxon>
    </lineage>
</organism>
<gene>
    <name evidence="13" type="primary">RAB37</name>
</gene>
<comment type="function">
    <text evidence="8">The small GTPases Rab are key regulators of intracellular membrane trafficking, from the formation of transport vesicles to their fusion with membranes. Rabs cycle between an inactive GDP-bound form and an active GTP-bound form that is able to recruit to membranes different sets of downstream effectors directly responsible for vesicle formation, movement, tethering and fusion (PubMed:38536817). Acts as an organizer for autophagosome biogenesis in a GTP-dependent manner (PubMed:38536817). Involved in retinal homeostasis by autophagy regulation (PubMed:38536817).</text>
</comment>
<comment type="catalytic activity">
    <reaction evidence="8">
        <text>GTP + H2O = GDP + phosphate + H(+)</text>
        <dbReference type="Rhea" id="RHEA:19669"/>
        <dbReference type="ChEBI" id="CHEBI:15377"/>
        <dbReference type="ChEBI" id="CHEBI:15378"/>
        <dbReference type="ChEBI" id="CHEBI:37565"/>
        <dbReference type="ChEBI" id="CHEBI:43474"/>
        <dbReference type="ChEBI" id="CHEBI:58189"/>
        <dbReference type="EC" id="3.6.5.2"/>
    </reaction>
    <physiologicalReaction direction="left-to-right" evidence="12">
        <dbReference type="Rhea" id="RHEA:19670"/>
    </physiologicalReaction>
</comment>
<comment type="cofactor">
    <cofactor evidence="2">
        <name>Mg(2+)</name>
        <dbReference type="ChEBI" id="CHEBI:18420"/>
    </cofactor>
</comment>
<comment type="activity regulation">
    <text evidence="8 11">Regulated by guanine nucleotide exchange factors (GEFs) including RPGR which promote the exchange of bound GDP for free GTP (PubMed:38536817). Regulated by GTPase activating proteins (GAPs) which increase the GTP hydrolysis activity (Probable). Inhibited by GDP dissociation inhibitors (GDIs) (Probable).</text>
</comment>
<comment type="subunit">
    <text evidence="1 4 8">Interacts with RIMS1 (By similarity). Interacts (in GDP-bound form) with RPGR, RPGR functions as guanine exchange factor (GEF) (PubMed:38536817).</text>
</comment>
<comment type="interaction">
    <interactant intactId="EBI-748121">
        <id>Q96AX2</id>
    </interactant>
    <interactant intactId="EBI-944295">
        <id>Q969L2</id>
        <label>MAL2</label>
    </interactant>
    <organismsDiffer>false</organismsDiffer>
    <experiments>3</experiments>
</comment>
<comment type="subcellular location">
    <subcellularLocation>
        <location evidence="4">Cytoplasmic vesicle</location>
    </subcellularLocation>
    <subcellularLocation>
        <location evidence="4">Cell projection</location>
        <location evidence="4">Cilium</location>
    </subcellularLocation>
    <text evidence="4">Secretory granules. Located mainly in the connecting cilia between the outer segment and inner segment and also observed in the outer plexiform layer, inner plexiform layer, and ganglion cell layer of the retinas.</text>
</comment>
<comment type="alternative products">
    <event type="alternative splicing"/>
    <isoform>
        <id>Q96AX2-1</id>
        <name>1</name>
        <sequence type="displayed"/>
    </isoform>
    <isoform>
        <id>Q96AX2-2</id>
        <name>2</name>
        <sequence type="described" ref="VSP_041268"/>
    </isoform>
    <isoform>
        <id>Q96AX2-3</id>
        <name>3</name>
        <sequence type="described" ref="VSP_043155"/>
    </isoform>
    <isoform>
        <id>Q96AX2-4</id>
        <name>4</name>
        <sequence type="described" ref="VSP_043156"/>
    </isoform>
</comment>
<comment type="domain">
    <text evidence="3">Switch 1, switch 2 and the interswitch regions are characteristic of Rab GTPases and mediate the interactions with Rab downstream effectors. The switch regions undergo conformational changes upon nucleotide binding which drive interaction with specific sets of effector proteins, with most effectors only binding to GTP-bound Rab.</text>
</comment>
<comment type="similarity">
    <text evidence="11">Belongs to the small GTPase superfamily. Rab family.</text>
</comment>
<protein>
    <recommendedName>
        <fullName>Ras-related protein Rab-37</fullName>
        <ecNumber evidence="8">3.6.5.2</ecNumber>
    </recommendedName>
</protein>
<proteinExistence type="evidence at protein level"/>
<dbReference type="EC" id="3.6.5.2" evidence="8"/>
<dbReference type="EMBL" id="AK098068">
    <property type="protein sequence ID" value="BAC05227.1"/>
    <property type="molecule type" value="mRNA"/>
</dbReference>
<dbReference type="EMBL" id="AK290202">
    <property type="protein sequence ID" value="BAF82891.1"/>
    <property type="molecule type" value="mRNA"/>
</dbReference>
<dbReference type="EMBL" id="AK296172">
    <property type="protein sequence ID" value="BAH12272.1"/>
    <property type="molecule type" value="mRNA"/>
</dbReference>
<dbReference type="EMBL" id="AK303442">
    <property type="protein sequence ID" value="BAH13962.1"/>
    <property type="molecule type" value="mRNA"/>
</dbReference>
<dbReference type="EMBL" id="AC016888">
    <property type="status" value="NOT_ANNOTATED_CDS"/>
    <property type="molecule type" value="Genomic_DNA"/>
</dbReference>
<dbReference type="EMBL" id="AC064805">
    <property type="status" value="NOT_ANNOTATED_CDS"/>
    <property type="molecule type" value="Genomic_DNA"/>
</dbReference>
<dbReference type="EMBL" id="CH471099">
    <property type="protein sequence ID" value="EAW89180.1"/>
    <property type="molecule type" value="Genomic_DNA"/>
</dbReference>
<dbReference type="EMBL" id="BC016615">
    <property type="protein sequence ID" value="AAH16615.1"/>
    <property type="molecule type" value="mRNA"/>
</dbReference>
<dbReference type="EMBL" id="BC040547">
    <property type="protein sequence ID" value="AAH40547.1"/>
    <property type="molecule type" value="mRNA"/>
</dbReference>
<dbReference type="CCDS" id="CCDS11703.1">
    <molecule id="Q96AX2-2"/>
</dbReference>
<dbReference type="CCDS" id="CCDS32722.1">
    <molecule id="Q96AX2-1"/>
</dbReference>
<dbReference type="CCDS" id="CCDS54162.1">
    <molecule id="Q96AX2-4"/>
</dbReference>
<dbReference type="RefSeq" id="NP_001006639.1">
    <molecule id="Q96AX2-1"/>
    <property type="nucleotide sequence ID" value="NM_001006638.3"/>
</dbReference>
<dbReference type="RefSeq" id="NP_001157461.1">
    <property type="nucleotide sequence ID" value="NM_001163989.1"/>
</dbReference>
<dbReference type="RefSeq" id="NP_001157462.1">
    <molecule id="Q96AX2-4"/>
    <property type="nucleotide sequence ID" value="NM_001163990.2"/>
</dbReference>
<dbReference type="RefSeq" id="NP_001317400.1">
    <property type="nucleotide sequence ID" value="NM_001330471.1"/>
</dbReference>
<dbReference type="RefSeq" id="NP_783865.1">
    <molecule id="Q96AX2-2"/>
    <property type="nucleotide sequence ID" value="NM_175738.5"/>
</dbReference>
<dbReference type="SMR" id="Q96AX2"/>
<dbReference type="BioGRID" id="130604">
    <property type="interactions" value="13"/>
</dbReference>
<dbReference type="FunCoup" id="Q96AX2">
    <property type="interactions" value="1184"/>
</dbReference>
<dbReference type="IntAct" id="Q96AX2">
    <property type="interactions" value="8"/>
</dbReference>
<dbReference type="STRING" id="9606.ENSP00000376390"/>
<dbReference type="GlyGen" id="Q96AX2">
    <property type="glycosylation" value="1 site, 1 O-linked glycan (1 site)"/>
</dbReference>
<dbReference type="iPTMnet" id="Q96AX2"/>
<dbReference type="PhosphoSitePlus" id="Q96AX2"/>
<dbReference type="BioMuta" id="RAB37"/>
<dbReference type="DMDM" id="20139581"/>
<dbReference type="jPOST" id="Q96AX2"/>
<dbReference type="MassIVE" id="Q96AX2"/>
<dbReference type="PaxDb" id="9606-ENSP00000376390"/>
<dbReference type="PeptideAtlas" id="Q96AX2"/>
<dbReference type="ProteomicsDB" id="76005">
    <molecule id="Q96AX2-1"/>
</dbReference>
<dbReference type="ProteomicsDB" id="76006">
    <molecule id="Q96AX2-2"/>
</dbReference>
<dbReference type="ProteomicsDB" id="76007">
    <molecule id="Q96AX2-3"/>
</dbReference>
<dbReference type="ProteomicsDB" id="76008">
    <molecule id="Q96AX2-4"/>
</dbReference>
<dbReference type="Antibodypedia" id="31994">
    <property type="antibodies" value="376 antibodies from 28 providers"/>
</dbReference>
<dbReference type="DNASU" id="326624"/>
<dbReference type="Ensembl" id="ENST00000392612.7">
    <molecule id="Q96AX2-4"/>
    <property type="protein sequence ID" value="ENSP00000376388.3"/>
    <property type="gene ID" value="ENSG00000172794.20"/>
</dbReference>
<dbReference type="Ensembl" id="ENST00000392613.10">
    <molecule id="Q96AX2-1"/>
    <property type="protein sequence ID" value="ENSP00000376389.5"/>
    <property type="gene ID" value="ENSG00000172794.20"/>
</dbReference>
<dbReference type="Ensembl" id="ENST00000402449.8">
    <molecule id="Q96AX2-2"/>
    <property type="protein sequence ID" value="ENSP00000383934.4"/>
    <property type="gene ID" value="ENSG00000172794.20"/>
</dbReference>
<dbReference type="Ensembl" id="ENST00000481224.5">
    <molecule id="Q96AX2-1"/>
    <property type="protein sequence ID" value="ENSP00000436563.1"/>
    <property type="gene ID" value="ENSG00000172794.20"/>
</dbReference>
<dbReference type="Ensembl" id="ENST00000613645.1">
    <molecule id="Q96AX2-1"/>
    <property type="protein sequence ID" value="ENSP00000483155.1"/>
    <property type="gene ID" value="ENSG00000172794.20"/>
</dbReference>
<dbReference type="GeneID" id="326624"/>
<dbReference type="KEGG" id="hsa:326624"/>
<dbReference type="MANE-Select" id="ENST00000392613.10">
    <property type="protein sequence ID" value="ENSP00000376389.5"/>
    <property type="RefSeq nucleotide sequence ID" value="NM_001006638.3"/>
    <property type="RefSeq protein sequence ID" value="NP_001006639.1"/>
</dbReference>
<dbReference type="UCSC" id="uc002jlk.4">
    <molecule id="Q96AX2-1"/>
    <property type="organism name" value="human"/>
</dbReference>
<dbReference type="AGR" id="HGNC:30268"/>
<dbReference type="CTD" id="326624"/>
<dbReference type="DisGeNET" id="326624"/>
<dbReference type="GeneCards" id="RAB37"/>
<dbReference type="HGNC" id="HGNC:30268">
    <property type="gene designation" value="RAB37"/>
</dbReference>
<dbReference type="HPA" id="ENSG00000172794">
    <property type="expression patterns" value="Tissue enhanced (bone marrow, brain, lymphoid tissue)"/>
</dbReference>
<dbReference type="MIM" id="609956">
    <property type="type" value="gene"/>
</dbReference>
<dbReference type="neXtProt" id="NX_Q96AX2"/>
<dbReference type="OpenTargets" id="ENSG00000172794"/>
<dbReference type="PharmGKB" id="PA134901093"/>
<dbReference type="VEuPathDB" id="HostDB:ENSG00000172794"/>
<dbReference type="eggNOG" id="KOG0083">
    <property type="taxonomic scope" value="Eukaryota"/>
</dbReference>
<dbReference type="GeneTree" id="ENSGT00940000158883"/>
<dbReference type="InParanoid" id="Q96AX2"/>
<dbReference type="OMA" id="NIMTQFT"/>
<dbReference type="OrthoDB" id="9989112at2759"/>
<dbReference type="PAN-GO" id="Q96AX2">
    <property type="GO annotations" value="4 GO annotations based on evolutionary models"/>
</dbReference>
<dbReference type="PhylomeDB" id="Q96AX2"/>
<dbReference type="TreeFam" id="TF323428"/>
<dbReference type="BRENDA" id="3.6.5.2">
    <property type="organism ID" value="2681"/>
</dbReference>
<dbReference type="PathwayCommons" id="Q96AX2"/>
<dbReference type="Reactome" id="R-HSA-6798695">
    <property type="pathway name" value="Neutrophil degranulation"/>
</dbReference>
<dbReference type="Reactome" id="R-HSA-8873719">
    <property type="pathway name" value="RAB geranylgeranylation"/>
</dbReference>
<dbReference type="SignaLink" id="Q96AX2"/>
<dbReference type="SIGNOR" id="Q96AX2"/>
<dbReference type="BioGRID-ORCS" id="326624">
    <property type="hits" value="8 hits in 1144 CRISPR screens"/>
</dbReference>
<dbReference type="ChiTaRS" id="RAB37">
    <property type="organism name" value="human"/>
</dbReference>
<dbReference type="GeneWiki" id="RAB37"/>
<dbReference type="GenomeRNAi" id="326624"/>
<dbReference type="Pharos" id="Q96AX2">
    <property type="development level" value="Tbio"/>
</dbReference>
<dbReference type="PRO" id="PR:Q96AX2"/>
<dbReference type="Proteomes" id="UP000005640">
    <property type="component" value="Chromosome 17"/>
</dbReference>
<dbReference type="RNAct" id="Q96AX2">
    <property type="molecule type" value="protein"/>
</dbReference>
<dbReference type="Bgee" id="ENSG00000172794">
    <property type="expression patterns" value="Expressed in cerebellar hemisphere and 118 other cell types or tissues"/>
</dbReference>
<dbReference type="ExpressionAtlas" id="Q96AX2">
    <property type="expression patterns" value="baseline and differential"/>
</dbReference>
<dbReference type="GO" id="GO:0035577">
    <property type="term" value="C:azurophil granule membrane"/>
    <property type="evidence" value="ECO:0000304"/>
    <property type="project" value="Reactome"/>
</dbReference>
<dbReference type="GO" id="GO:0005793">
    <property type="term" value="C:endoplasmic reticulum-Golgi intermediate compartment"/>
    <property type="evidence" value="ECO:0000314"/>
    <property type="project" value="UniProtKB"/>
</dbReference>
<dbReference type="GO" id="GO:0005768">
    <property type="term" value="C:endosome"/>
    <property type="evidence" value="ECO:0000318"/>
    <property type="project" value="GO_Central"/>
</dbReference>
<dbReference type="GO" id="GO:0005794">
    <property type="term" value="C:Golgi apparatus"/>
    <property type="evidence" value="ECO:0000318"/>
    <property type="project" value="GO_Central"/>
</dbReference>
<dbReference type="GO" id="GO:0032391">
    <property type="term" value="C:photoreceptor connecting cilium"/>
    <property type="evidence" value="ECO:0000250"/>
    <property type="project" value="UniProtKB"/>
</dbReference>
<dbReference type="GO" id="GO:0005886">
    <property type="term" value="C:plasma membrane"/>
    <property type="evidence" value="ECO:0000304"/>
    <property type="project" value="Reactome"/>
</dbReference>
<dbReference type="GO" id="GO:0035579">
    <property type="term" value="C:specific granule membrane"/>
    <property type="evidence" value="ECO:0000304"/>
    <property type="project" value="Reactome"/>
</dbReference>
<dbReference type="GO" id="GO:0003925">
    <property type="term" value="F:G protein activity"/>
    <property type="evidence" value="ECO:0000315"/>
    <property type="project" value="UniProtKB"/>
</dbReference>
<dbReference type="GO" id="GO:0005525">
    <property type="term" value="F:GTP binding"/>
    <property type="evidence" value="ECO:0000318"/>
    <property type="project" value="GO_Central"/>
</dbReference>
<dbReference type="GO" id="GO:0003924">
    <property type="term" value="F:GTPase activity"/>
    <property type="evidence" value="ECO:0000318"/>
    <property type="project" value="GO_Central"/>
</dbReference>
<dbReference type="GO" id="GO:0010508">
    <property type="term" value="P:positive regulation of autophagy"/>
    <property type="evidence" value="ECO:0000315"/>
    <property type="project" value="UniProtKB"/>
</dbReference>
<dbReference type="GO" id="GO:0015031">
    <property type="term" value="P:protein transport"/>
    <property type="evidence" value="ECO:0007669"/>
    <property type="project" value="UniProtKB-KW"/>
</dbReference>
<dbReference type="GO" id="GO:0017157">
    <property type="term" value="P:regulation of exocytosis"/>
    <property type="evidence" value="ECO:0000318"/>
    <property type="project" value="GO_Central"/>
</dbReference>
<dbReference type="GO" id="GO:0042478">
    <property type="term" value="P:regulation of eye photoreceptor cell development"/>
    <property type="evidence" value="ECO:0000250"/>
    <property type="project" value="UniProtKB"/>
</dbReference>
<dbReference type="CDD" id="cd04112">
    <property type="entry name" value="Rab26"/>
    <property type="match status" value="1"/>
</dbReference>
<dbReference type="FunFam" id="3.40.50.300:FF:000459">
    <property type="entry name" value="ras-related protein Rab-37 isoform X1"/>
    <property type="match status" value="1"/>
</dbReference>
<dbReference type="Gene3D" id="3.40.50.300">
    <property type="entry name" value="P-loop containing nucleotide triphosphate hydrolases"/>
    <property type="match status" value="1"/>
</dbReference>
<dbReference type="InterPro" id="IPR027417">
    <property type="entry name" value="P-loop_NTPase"/>
</dbReference>
<dbReference type="InterPro" id="IPR005225">
    <property type="entry name" value="Small_GTP-bd"/>
</dbReference>
<dbReference type="InterPro" id="IPR001806">
    <property type="entry name" value="Small_GTPase"/>
</dbReference>
<dbReference type="NCBIfam" id="TIGR00231">
    <property type="entry name" value="small_GTP"/>
    <property type="match status" value="1"/>
</dbReference>
<dbReference type="PANTHER" id="PTHR47978">
    <property type="match status" value="1"/>
</dbReference>
<dbReference type="Pfam" id="PF00071">
    <property type="entry name" value="Ras"/>
    <property type="match status" value="1"/>
</dbReference>
<dbReference type="PRINTS" id="PR00449">
    <property type="entry name" value="RASTRNSFRMNG"/>
</dbReference>
<dbReference type="SMART" id="SM00177">
    <property type="entry name" value="ARF"/>
    <property type="match status" value="1"/>
</dbReference>
<dbReference type="SMART" id="SM00175">
    <property type="entry name" value="RAB"/>
    <property type="match status" value="1"/>
</dbReference>
<dbReference type="SMART" id="SM00176">
    <property type="entry name" value="RAN"/>
    <property type="match status" value="1"/>
</dbReference>
<dbReference type="SMART" id="SM00173">
    <property type="entry name" value="RAS"/>
    <property type="match status" value="1"/>
</dbReference>
<dbReference type="SMART" id="SM00174">
    <property type="entry name" value="RHO"/>
    <property type="match status" value="1"/>
</dbReference>
<dbReference type="SUPFAM" id="SSF52540">
    <property type="entry name" value="P-loop containing nucleoside triphosphate hydrolases"/>
    <property type="match status" value="1"/>
</dbReference>
<dbReference type="PROSITE" id="PS51419">
    <property type="entry name" value="RAB"/>
    <property type="match status" value="1"/>
</dbReference>
<reference key="1">
    <citation type="journal article" date="2004" name="Nat. Genet.">
        <title>Complete sequencing and characterization of 21,243 full-length human cDNAs.</title>
        <authorList>
            <person name="Ota T."/>
            <person name="Suzuki Y."/>
            <person name="Nishikawa T."/>
            <person name="Otsuki T."/>
            <person name="Sugiyama T."/>
            <person name="Irie R."/>
            <person name="Wakamatsu A."/>
            <person name="Hayashi K."/>
            <person name="Sato H."/>
            <person name="Nagai K."/>
            <person name="Kimura K."/>
            <person name="Makita H."/>
            <person name="Sekine M."/>
            <person name="Obayashi M."/>
            <person name="Nishi T."/>
            <person name="Shibahara T."/>
            <person name="Tanaka T."/>
            <person name="Ishii S."/>
            <person name="Yamamoto J."/>
            <person name="Saito K."/>
            <person name="Kawai Y."/>
            <person name="Isono Y."/>
            <person name="Nakamura Y."/>
            <person name="Nagahari K."/>
            <person name="Murakami K."/>
            <person name="Yasuda T."/>
            <person name="Iwayanagi T."/>
            <person name="Wagatsuma M."/>
            <person name="Shiratori A."/>
            <person name="Sudo H."/>
            <person name="Hosoiri T."/>
            <person name="Kaku Y."/>
            <person name="Kodaira H."/>
            <person name="Kondo H."/>
            <person name="Sugawara M."/>
            <person name="Takahashi M."/>
            <person name="Kanda K."/>
            <person name="Yokoi T."/>
            <person name="Furuya T."/>
            <person name="Kikkawa E."/>
            <person name="Omura Y."/>
            <person name="Abe K."/>
            <person name="Kamihara K."/>
            <person name="Katsuta N."/>
            <person name="Sato K."/>
            <person name="Tanikawa M."/>
            <person name="Yamazaki M."/>
            <person name="Ninomiya K."/>
            <person name="Ishibashi T."/>
            <person name="Yamashita H."/>
            <person name="Murakawa K."/>
            <person name="Fujimori K."/>
            <person name="Tanai H."/>
            <person name="Kimata M."/>
            <person name="Watanabe M."/>
            <person name="Hiraoka S."/>
            <person name="Chiba Y."/>
            <person name="Ishida S."/>
            <person name="Ono Y."/>
            <person name="Takiguchi S."/>
            <person name="Watanabe S."/>
            <person name="Yosida M."/>
            <person name="Hotuta T."/>
            <person name="Kusano J."/>
            <person name="Kanehori K."/>
            <person name="Takahashi-Fujii A."/>
            <person name="Hara H."/>
            <person name="Tanase T.-O."/>
            <person name="Nomura Y."/>
            <person name="Togiya S."/>
            <person name="Komai F."/>
            <person name="Hara R."/>
            <person name="Takeuchi K."/>
            <person name="Arita M."/>
            <person name="Imose N."/>
            <person name="Musashino K."/>
            <person name="Yuuki H."/>
            <person name="Oshima A."/>
            <person name="Sasaki N."/>
            <person name="Aotsuka S."/>
            <person name="Yoshikawa Y."/>
            <person name="Matsunawa H."/>
            <person name="Ichihara T."/>
            <person name="Shiohata N."/>
            <person name="Sano S."/>
            <person name="Moriya S."/>
            <person name="Momiyama H."/>
            <person name="Satoh N."/>
            <person name="Takami S."/>
            <person name="Terashima Y."/>
            <person name="Suzuki O."/>
            <person name="Nakagawa S."/>
            <person name="Senoh A."/>
            <person name="Mizoguchi H."/>
            <person name="Goto Y."/>
            <person name="Shimizu F."/>
            <person name="Wakebe H."/>
            <person name="Hishigaki H."/>
            <person name="Watanabe T."/>
            <person name="Sugiyama A."/>
            <person name="Takemoto M."/>
            <person name="Kawakami B."/>
            <person name="Yamazaki M."/>
            <person name="Watanabe K."/>
            <person name="Kumagai A."/>
            <person name="Itakura S."/>
            <person name="Fukuzumi Y."/>
            <person name="Fujimori Y."/>
            <person name="Komiyama M."/>
            <person name="Tashiro H."/>
            <person name="Tanigami A."/>
            <person name="Fujiwara T."/>
            <person name="Ono T."/>
            <person name="Yamada K."/>
            <person name="Fujii Y."/>
            <person name="Ozaki K."/>
            <person name="Hirao M."/>
            <person name="Ohmori Y."/>
            <person name="Kawabata A."/>
            <person name="Hikiji T."/>
            <person name="Kobatake N."/>
            <person name="Inagaki H."/>
            <person name="Ikema Y."/>
            <person name="Okamoto S."/>
            <person name="Okitani R."/>
            <person name="Kawakami T."/>
            <person name="Noguchi S."/>
            <person name="Itoh T."/>
            <person name="Shigeta K."/>
            <person name="Senba T."/>
            <person name="Matsumura K."/>
            <person name="Nakajima Y."/>
            <person name="Mizuno T."/>
            <person name="Morinaga M."/>
            <person name="Sasaki M."/>
            <person name="Togashi T."/>
            <person name="Oyama M."/>
            <person name="Hata H."/>
            <person name="Watanabe M."/>
            <person name="Komatsu T."/>
            <person name="Mizushima-Sugano J."/>
            <person name="Satoh T."/>
            <person name="Shirai Y."/>
            <person name="Takahashi Y."/>
            <person name="Nakagawa K."/>
            <person name="Okumura K."/>
            <person name="Nagase T."/>
            <person name="Nomura N."/>
            <person name="Kikuchi H."/>
            <person name="Masuho Y."/>
            <person name="Yamashita R."/>
            <person name="Nakai K."/>
            <person name="Yada T."/>
            <person name="Nakamura Y."/>
            <person name="Ohara O."/>
            <person name="Isogai T."/>
            <person name="Sugano S."/>
        </authorList>
    </citation>
    <scope>NUCLEOTIDE SEQUENCE [LARGE SCALE MRNA] (ISOFORMS 1; 2; 3 AND 4)</scope>
    <source>
        <tissue>Thalamus</tissue>
        <tissue>Thymus</tissue>
        <tissue>Trachea</tissue>
    </source>
</reference>
<reference key="2">
    <citation type="journal article" date="2006" name="Nature">
        <title>DNA sequence of human chromosome 17 and analysis of rearrangement in the human lineage.</title>
        <authorList>
            <person name="Zody M.C."/>
            <person name="Garber M."/>
            <person name="Adams D.J."/>
            <person name="Sharpe T."/>
            <person name="Harrow J."/>
            <person name="Lupski J.R."/>
            <person name="Nicholson C."/>
            <person name="Searle S.M."/>
            <person name="Wilming L."/>
            <person name="Young S.K."/>
            <person name="Abouelleil A."/>
            <person name="Allen N.R."/>
            <person name="Bi W."/>
            <person name="Bloom T."/>
            <person name="Borowsky M.L."/>
            <person name="Bugalter B.E."/>
            <person name="Butler J."/>
            <person name="Chang J.L."/>
            <person name="Chen C.-K."/>
            <person name="Cook A."/>
            <person name="Corum B."/>
            <person name="Cuomo C.A."/>
            <person name="de Jong P.J."/>
            <person name="DeCaprio D."/>
            <person name="Dewar K."/>
            <person name="FitzGerald M."/>
            <person name="Gilbert J."/>
            <person name="Gibson R."/>
            <person name="Gnerre S."/>
            <person name="Goldstein S."/>
            <person name="Grafham D.V."/>
            <person name="Grocock R."/>
            <person name="Hafez N."/>
            <person name="Hagopian D.S."/>
            <person name="Hart E."/>
            <person name="Norman C.H."/>
            <person name="Humphray S."/>
            <person name="Jaffe D.B."/>
            <person name="Jones M."/>
            <person name="Kamal M."/>
            <person name="Khodiyar V.K."/>
            <person name="LaButti K."/>
            <person name="Laird G."/>
            <person name="Lehoczky J."/>
            <person name="Liu X."/>
            <person name="Lokyitsang T."/>
            <person name="Loveland J."/>
            <person name="Lui A."/>
            <person name="Macdonald P."/>
            <person name="Major J.E."/>
            <person name="Matthews L."/>
            <person name="Mauceli E."/>
            <person name="McCarroll S.A."/>
            <person name="Mihalev A.H."/>
            <person name="Mudge J."/>
            <person name="Nguyen C."/>
            <person name="Nicol R."/>
            <person name="O'Leary S.B."/>
            <person name="Osoegawa K."/>
            <person name="Schwartz D.C."/>
            <person name="Shaw-Smith C."/>
            <person name="Stankiewicz P."/>
            <person name="Steward C."/>
            <person name="Swarbreck D."/>
            <person name="Venkataraman V."/>
            <person name="Whittaker C.A."/>
            <person name="Yang X."/>
            <person name="Zimmer A.R."/>
            <person name="Bradley A."/>
            <person name="Hubbard T."/>
            <person name="Birren B.W."/>
            <person name="Rogers J."/>
            <person name="Lander E.S."/>
            <person name="Nusbaum C."/>
        </authorList>
    </citation>
    <scope>NUCLEOTIDE SEQUENCE [LARGE SCALE GENOMIC DNA]</scope>
</reference>
<reference key="3">
    <citation type="submission" date="2005-07" db="EMBL/GenBank/DDBJ databases">
        <authorList>
            <person name="Mural R.J."/>
            <person name="Istrail S."/>
            <person name="Sutton G.G."/>
            <person name="Florea L."/>
            <person name="Halpern A.L."/>
            <person name="Mobarry C.M."/>
            <person name="Lippert R."/>
            <person name="Walenz B."/>
            <person name="Shatkay H."/>
            <person name="Dew I."/>
            <person name="Miller J.R."/>
            <person name="Flanigan M.J."/>
            <person name="Edwards N.J."/>
            <person name="Bolanos R."/>
            <person name="Fasulo D."/>
            <person name="Halldorsson B.V."/>
            <person name="Hannenhalli S."/>
            <person name="Turner R."/>
            <person name="Yooseph S."/>
            <person name="Lu F."/>
            <person name="Nusskern D.R."/>
            <person name="Shue B.C."/>
            <person name="Zheng X.H."/>
            <person name="Zhong F."/>
            <person name="Delcher A.L."/>
            <person name="Huson D.H."/>
            <person name="Kravitz S.A."/>
            <person name="Mouchard L."/>
            <person name="Reinert K."/>
            <person name="Remington K.A."/>
            <person name="Clark A.G."/>
            <person name="Waterman M.S."/>
            <person name="Eichler E.E."/>
            <person name="Adams M.D."/>
            <person name="Hunkapiller M.W."/>
            <person name="Myers E.W."/>
            <person name="Venter J.C."/>
        </authorList>
    </citation>
    <scope>NUCLEOTIDE SEQUENCE [LARGE SCALE GENOMIC DNA]</scope>
</reference>
<reference key="4">
    <citation type="journal article" date="2004" name="Genome Res.">
        <title>The status, quality, and expansion of the NIH full-length cDNA project: the Mammalian Gene Collection (MGC).</title>
        <authorList>
            <consortium name="The MGC Project Team"/>
        </authorList>
    </citation>
    <scope>NUCLEOTIDE SEQUENCE [LARGE SCALE MRNA] (ISOFORMS 1 AND 2)</scope>
    <source>
        <tissue>Prostate</tissue>
    </source>
</reference>
<reference key="5">
    <citation type="journal article" date="2003" name="Nat. Biotechnol.">
        <title>Exploring proteomes and analyzing protein processing by mass spectrometric identification of sorted N-terminal peptides.</title>
        <authorList>
            <person name="Gevaert K."/>
            <person name="Goethals M."/>
            <person name="Martens L."/>
            <person name="Van Damme J."/>
            <person name="Staes A."/>
            <person name="Thomas G.R."/>
            <person name="Vandekerckhove J."/>
        </authorList>
    </citation>
    <scope>PROTEIN SEQUENCE OF 2-11</scope>
    <scope>ACETYLATION AT THR-2</scope>
    <source>
        <tissue>Platelet</tissue>
    </source>
</reference>
<reference key="6">
    <citation type="journal article" date="2024" name="Cell Rep.">
        <title>RPGR is a guanine nucleotide exchange factor for the small GTPase RAB37 required for retinal function via autophagy regulation.</title>
        <authorList>
            <person name="Ying R."/>
            <person name="Li C."/>
            <person name="Li H."/>
            <person name="Zou J."/>
            <person name="Hu M."/>
            <person name="Hong Q."/>
            <person name="Shen Y."/>
            <person name="Hou L."/>
            <person name="Cheng H."/>
            <person name="Zhou R."/>
        </authorList>
    </citation>
    <scope>FUNCTION</scope>
    <scope>CATALYTIC ACTIVITY</scope>
    <scope>INTERACTION WITH RPGR</scope>
    <scope>ACTIVITY REGULATION</scope>
    <scope>MUTAGENESIS OF THR-43 AND GLN-89</scope>
</reference>
<sequence>MTGTPGAVATRDGEAPERSPPCSPSYDLTGKVMLLGDTGVGKTCFLIQFKDGAFLSGTFIATVGIDFRNKVVTVDGVRVKLQIWDTAGQERFRSVTHAYYRDAQALLLLYDITNKSSFDNIRAWLTEIHEYAQRDVVIMLLGNKADMSSERVIRSEDGETLAREYGVPFLETSAKTGMNVELAFLAIAKELKYRAGHQADEPSFQIRDYVESQKKRSSCCSFM</sequence>
<name>RAB37_HUMAN</name>
<accession>Q96AX2</accession>
<accession>A8MXF5</accession>
<accession>A8MYT0</accession>
<accession>Q8IWA7</accession>
<feature type="initiator methionine" description="Removed" evidence="7">
    <location>
        <position position="1"/>
    </location>
</feature>
<feature type="chain" id="PRO_0000121249" description="Ras-related protein Rab-37">
    <location>
        <begin position="2"/>
        <end position="220"/>
    </location>
</feature>
<feature type="propeptide" id="PRO_0000370828" description="Removed in mature form" evidence="5">
    <location>
        <begin position="221"/>
        <end position="223"/>
    </location>
</feature>
<feature type="region of interest" description="Disordered" evidence="6">
    <location>
        <begin position="1"/>
        <end position="23"/>
    </location>
</feature>
<feature type="short sequence motif" description="Switch 1" evidence="3">
    <location>
        <begin position="52"/>
        <end position="67"/>
    </location>
</feature>
<feature type="short sequence motif" description="Switch 2" evidence="3">
    <location>
        <begin position="85"/>
        <end position="102"/>
    </location>
</feature>
<feature type="binding site" evidence="2">
    <location>
        <position position="38"/>
    </location>
    <ligand>
        <name>GTP</name>
        <dbReference type="ChEBI" id="CHEBI:37565"/>
    </ligand>
</feature>
<feature type="binding site" evidence="2">
    <location>
        <position position="39"/>
    </location>
    <ligand>
        <name>GTP</name>
        <dbReference type="ChEBI" id="CHEBI:37565"/>
    </ligand>
</feature>
<feature type="binding site" evidence="2">
    <location>
        <position position="40"/>
    </location>
    <ligand>
        <name>GTP</name>
        <dbReference type="ChEBI" id="CHEBI:37565"/>
    </ligand>
</feature>
<feature type="binding site" evidence="2">
    <location>
        <position position="41"/>
    </location>
    <ligand>
        <name>GTP</name>
        <dbReference type="ChEBI" id="CHEBI:37565"/>
    </ligand>
</feature>
<feature type="binding site" evidence="2">
    <location>
        <position position="42"/>
    </location>
    <ligand>
        <name>GTP</name>
        <dbReference type="ChEBI" id="CHEBI:37565"/>
    </ligand>
</feature>
<feature type="binding site" evidence="2">
    <location>
        <position position="43"/>
    </location>
    <ligand>
        <name>GTP</name>
        <dbReference type="ChEBI" id="CHEBI:37565"/>
    </ligand>
</feature>
<feature type="binding site" evidence="2">
    <location>
        <position position="43"/>
    </location>
    <ligand>
        <name>Mg(2+)</name>
        <dbReference type="ChEBI" id="CHEBI:18420"/>
    </ligand>
</feature>
<feature type="binding site" evidence="2">
    <location>
        <position position="44"/>
    </location>
    <ligand>
        <name>GTP</name>
        <dbReference type="ChEBI" id="CHEBI:37565"/>
    </ligand>
</feature>
<feature type="binding site" evidence="2">
    <location>
        <position position="62"/>
    </location>
    <ligand>
        <name>GTP</name>
        <dbReference type="ChEBI" id="CHEBI:37565"/>
    </ligand>
</feature>
<feature type="binding site" evidence="2">
    <location>
        <position position="62"/>
    </location>
    <ligand>
        <name>Mg(2+)</name>
        <dbReference type="ChEBI" id="CHEBI:18420"/>
    </ligand>
</feature>
<feature type="binding site" evidence="2">
    <location>
        <position position="85"/>
    </location>
    <ligand>
        <name>Mg(2+)</name>
        <dbReference type="ChEBI" id="CHEBI:18420"/>
    </ligand>
</feature>
<feature type="binding site" evidence="2">
    <location>
        <position position="88"/>
    </location>
    <ligand>
        <name>GTP</name>
        <dbReference type="ChEBI" id="CHEBI:37565"/>
    </ligand>
</feature>
<feature type="binding site" evidence="2">
    <location>
        <position position="143"/>
    </location>
    <ligand>
        <name>GTP</name>
        <dbReference type="ChEBI" id="CHEBI:37565"/>
    </ligand>
</feature>
<feature type="binding site" evidence="2">
    <location>
        <position position="144"/>
    </location>
    <ligand>
        <name>GTP</name>
        <dbReference type="ChEBI" id="CHEBI:37565"/>
    </ligand>
</feature>
<feature type="binding site" evidence="2">
    <location>
        <position position="146"/>
    </location>
    <ligand>
        <name>GTP</name>
        <dbReference type="ChEBI" id="CHEBI:37565"/>
    </ligand>
</feature>
<feature type="binding site" evidence="2">
    <location>
        <position position="147"/>
    </location>
    <ligand>
        <name>GTP</name>
        <dbReference type="ChEBI" id="CHEBI:37565"/>
    </ligand>
</feature>
<feature type="binding site" evidence="2">
    <location>
        <position position="173"/>
    </location>
    <ligand>
        <name>GTP</name>
        <dbReference type="ChEBI" id="CHEBI:37565"/>
    </ligand>
</feature>
<feature type="binding site" evidence="2">
    <location>
        <position position="174"/>
    </location>
    <ligand>
        <name>GTP</name>
        <dbReference type="ChEBI" id="CHEBI:37565"/>
    </ligand>
</feature>
<feature type="binding site" evidence="2">
    <location>
        <position position="175"/>
    </location>
    <ligand>
        <name>GTP</name>
        <dbReference type="ChEBI" id="CHEBI:37565"/>
    </ligand>
</feature>
<feature type="modified residue" description="N-acetylthreonine" evidence="7">
    <location>
        <position position="2"/>
    </location>
</feature>
<feature type="modified residue" description="Cysteine methyl ester" evidence="5">
    <location>
        <position position="220"/>
    </location>
</feature>
<feature type="lipid moiety-binding region" description="S-geranylgeranyl cysteine" evidence="1">
    <location>
        <position position="219"/>
    </location>
</feature>
<feature type="lipid moiety-binding region" description="S-geranylgeranyl cysteine" evidence="1">
    <location>
        <position position="220"/>
    </location>
</feature>
<feature type="splice variant" id="VSP_041268" description="In isoform 2." evidence="9 10">
    <original>MTGTPGAVATRDGEAPERSPPCSPSYDLTGKVMLLGDTGVGKTCFLIQFKDGAFLSGTFIATVGIDFR</original>
    <variation>MDLQRPDSYQGGAGPDFNDHVLHKTILVGDSGVGKTSLLVQFDQGKFIPGSFSATVGIGFT</variation>
    <location>
        <begin position="1"/>
        <end position="68"/>
    </location>
</feature>
<feature type="splice variant" id="VSP_043155" description="In isoform 3." evidence="9">
    <original>MTGTPGAVATRDGEAPERSPPCSPSYDLTG</original>
    <variation>MWLMSEAHGAEPVLLREAARPFTQTLRLCVPSGNS</variation>
    <location>
        <begin position="1"/>
        <end position="30"/>
    </location>
</feature>
<feature type="splice variant" id="VSP_043156" description="In isoform 4." evidence="9">
    <location>
        <begin position="32"/>
        <end position="68"/>
    </location>
</feature>
<feature type="sequence variant" id="VAR_034434" description="In dbSNP:rs34215331.">
    <original>A</original>
    <variation>P</variation>
    <location>
        <position position="188"/>
    </location>
</feature>
<feature type="mutagenesis site" description="Stimulates interaction with RPGR. Loss of exchange between RAB37-GDP to RAB37-GTP." evidence="8">
    <original>T</original>
    <variation>N</variation>
    <location>
        <position position="43"/>
    </location>
</feature>
<feature type="mutagenesis site" description="Decreased interaction with RPGR. Loss of exchange between RAB37-GDP to RAB37-GTP." evidence="8">
    <original>Q</original>
    <variation>L</variation>
    <location>
        <position position="89"/>
    </location>
</feature>